<comment type="function">
    <text>Could serve either a nutritional or an osmotic protection function.</text>
</comment>
<comment type="subcellular location">
    <subcellularLocation>
        <location evidence="2">Cell membrane</location>
        <topology evidence="2">Multi-pass membrane protein</topology>
    </subcellularLocation>
</comment>
<comment type="similarity">
    <text evidence="2">Belongs to the major facilitator superfamily. Sugar transporter (TC 2.A.1.1) family.</text>
</comment>
<organism>
    <name type="scientific">Bacillus subtilis (strain 168)</name>
    <dbReference type="NCBI Taxonomy" id="224308"/>
    <lineage>
        <taxon>Bacteria</taxon>
        <taxon>Bacillati</taxon>
        <taxon>Bacillota</taxon>
        <taxon>Bacilli</taxon>
        <taxon>Bacillales</taxon>
        <taxon>Bacillaceae</taxon>
        <taxon>Bacillus</taxon>
    </lineage>
</organism>
<accession>P46333</accession>
<accession>O32289</accession>
<evidence type="ECO:0000255" key="1"/>
<evidence type="ECO:0000305" key="2"/>
<proteinExistence type="evidence at protein level"/>
<gene>
    <name type="primary">csbC</name>
    <name type="synonym">yxcC</name>
    <name type="ordered locus">BSU39810</name>
    <name type="ORF">SS92BR</name>
</gene>
<reference key="1">
    <citation type="journal article" date="1995" name="DNA Res.">
        <title>Cloning and sequencing of a 36-kb region of the Bacillus subtilis genome between the gnt and iol operons.</title>
        <authorList>
            <person name="Yoshida K."/>
            <person name="Seki S."/>
            <person name="Fujimura M."/>
            <person name="Miwa Y."/>
            <person name="Fujita Y."/>
        </authorList>
    </citation>
    <scope>NUCLEOTIDE SEQUENCE [GENOMIC DNA]</scope>
    <source>
        <strain>168 / BGSC1A1</strain>
    </source>
</reference>
<reference key="2">
    <citation type="submission" date="1997-06" db="EMBL/GenBank/DDBJ databases">
        <authorList>
            <person name="Fujita Y."/>
            <person name="Shibayama T."/>
            <person name="Ishio I."/>
            <person name="Aoyama D."/>
            <person name="Yoshida K."/>
        </authorList>
    </citation>
    <scope>SEQUENCE REVISION</scope>
</reference>
<reference key="3">
    <citation type="journal article" date="1997" name="Nature">
        <title>The complete genome sequence of the Gram-positive bacterium Bacillus subtilis.</title>
        <authorList>
            <person name="Kunst F."/>
            <person name="Ogasawara N."/>
            <person name="Moszer I."/>
            <person name="Albertini A.M."/>
            <person name="Alloni G."/>
            <person name="Azevedo V."/>
            <person name="Bertero M.G."/>
            <person name="Bessieres P."/>
            <person name="Bolotin A."/>
            <person name="Borchert S."/>
            <person name="Borriss R."/>
            <person name="Boursier L."/>
            <person name="Brans A."/>
            <person name="Braun M."/>
            <person name="Brignell S.C."/>
            <person name="Bron S."/>
            <person name="Brouillet S."/>
            <person name="Bruschi C.V."/>
            <person name="Caldwell B."/>
            <person name="Capuano V."/>
            <person name="Carter N.M."/>
            <person name="Choi S.-K."/>
            <person name="Codani J.-J."/>
            <person name="Connerton I.F."/>
            <person name="Cummings N.J."/>
            <person name="Daniel R.A."/>
            <person name="Denizot F."/>
            <person name="Devine K.M."/>
            <person name="Duesterhoeft A."/>
            <person name="Ehrlich S.D."/>
            <person name="Emmerson P.T."/>
            <person name="Entian K.-D."/>
            <person name="Errington J."/>
            <person name="Fabret C."/>
            <person name="Ferrari E."/>
            <person name="Foulger D."/>
            <person name="Fritz C."/>
            <person name="Fujita M."/>
            <person name="Fujita Y."/>
            <person name="Fuma S."/>
            <person name="Galizzi A."/>
            <person name="Galleron N."/>
            <person name="Ghim S.-Y."/>
            <person name="Glaser P."/>
            <person name="Goffeau A."/>
            <person name="Golightly E.J."/>
            <person name="Grandi G."/>
            <person name="Guiseppi G."/>
            <person name="Guy B.J."/>
            <person name="Haga K."/>
            <person name="Haiech J."/>
            <person name="Harwood C.R."/>
            <person name="Henaut A."/>
            <person name="Hilbert H."/>
            <person name="Holsappel S."/>
            <person name="Hosono S."/>
            <person name="Hullo M.-F."/>
            <person name="Itaya M."/>
            <person name="Jones L.-M."/>
            <person name="Joris B."/>
            <person name="Karamata D."/>
            <person name="Kasahara Y."/>
            <person name="Klaerr-Blanchard M."/>
            <person name="Klein C."/>
            <person name="Kobayashi Y."/>
            <person name="Koetter P."/>
            <person name="Koningstein G."/>
            <person name="Krogh S."/>
            <person name="Kumano M."/>
            <person name="Kurita K."/>
            <person name="Lapidus A."/>
            <person name="Lardinois S."/>
            <person name="Lauber J."/>
            <person name="Lazarevic V."/>
            <person name="Lee S.-M."/>
            <person name="Levine A."/>
            <person name="Liu H."/>
            <person name="Masuda S."/>
            <person name="Mauel C."/>
            <person name="Medigue C."/>
            <person name="Medina N."/>
            <person name="Mellado R.P."/>
            <person name="Mizuno M."/>
            <person name="Moestl D."/>
            <person name="Nakai S."/>
            <person name="Noback M."/>
            <person name="Noone D."/>
            <person name="O'Reilly M."/>
            <person name="Ogawa K."/>
            <person name="Ogiwara A."/>
            <person name="Oudega B."/>
            <person name="Park S.-H."/>
            <person name="Parro V."/>
            <person name="Pohl T.M."/>
            <person name="Portetelle D."/>
            <person name="Porwollik S."/>
            <person name="Prescott A.M."/>
            <person name="Presecan E."/>
            <person name="Pujic P."/>
            <person name="Purnelle B."/>
            <person name="Rapoport G."/>
            <person name="Rey M."/>
            <person name="Reynolds S."/>
            <person name="Rieger M."/>
            <person name="Rivolta C."/>
            <person name="Rocha E."/>
            <person name="Roche B."/>
            <person name="Rose M."/>
            <person name="Sadaie Y."/>
            <person name="Sato T."/>
            <person name="Scanlan E."/>
            <person name="Schleich S."/>
            <person name="Schroeter R."/>
            <person name="Scoffone F."/>
            <person name="Sekiguchi J."/>
            <person name="Sekowska A."/>
            <person name="Seror S.J."/>
            <person name="Serror P."/>
            <person name="Shin B.-S."/>
            <person name="Soldo B."/>
            <person name="Sorokin A."/>
            <person name="Tacconi E."/>
            <person name="Takagi T."/>
            <person name="Takahashi H."/>
            <person name="Takemaru K."/>
            <person name="Takeuchi M."/>
            <person name="Tamakoshi A."/>
            <person name="Tanaka T."/>
            <person name="Terpstra P."/>
            <person name="Tognoni A."/>
            <person name="Tosato V."/>
            <person name="Uchiyama S."/>
            <person name="Vandenbol M."/>
            <person name="Vannier F."/>
            <person name="Vassarotti A."/>
            <person name="Viari A."/>
            <person name="Wambutt R."/>
            <person name="Wedler E."/>
            <person name="Wedler H."/>
            <person name="Weitzenegger T."/>
            <person name="Winters P."/>
            <person name="Wipat A."/>
            <person name="Yamamoto H."/>
            <person name="Yamane K."/>
            <person name="Yasumoto K."/>
            <person name="Yata K."/>
            <person name="Yoshida K."/>
            <person name="Yoshikawa H.-F."/>
            <person name="Zumstein E."/>
            <person name="Yoshikawa H."/>
            <person name="Danchin A."/>
        </authorList>
    </citation>
    <scope>NUCLEOTIDE SEQUENCE [LARGE SCALE GENOMIC DNA]</scope>
    <source>
        <strain>168</strain>
    </source>
</reference>
<reference key="4">
    <citation type="journal article" date="1999" name="Microbiology">
        <title>Two genes from Bacillus subtilis under the sole control of the general stress transcription factor sigmaB.</title>
        <authorList>
            <person name="Akbar S."/>
            <person name="Lee S.Y."/>
            <person name="Boylan S.A."/>
            <person name="Price C.W."/>
        </authorList>
    </citation>
    <scope>CHARACTERIZATION</scope>
</reference>
<feature type="chain" id="PRO_0000050303" description="Probable metabolite transport protein CsbC">
    <location>
        <begin position="1"/>
        <end position="461"/>
    </location>
</feature>
<feature type="topological domain" description="Cytoplasmic" evidence="1">
    <location>
        <begin position="1"/>
        <end position="14"/>
    </location>
</feature>
<feature type="transmembrane region" description="Helical; Name=1" evidence="1">
    <location>
        <begin position="15"/>
        <end position="35"/>
    </location>
</feature>
<feature type="topological domain" description="Extracellular" evidence="1">
    <location>
        <begin position="36"/>
        <end position="38"/>
    </location>
</feature>
<feature type="transmembrane region" description="Helical; Name=2" evidence="1">
    <location>
        <begin position="39"/>
        <end position="59"/>
    </location>
</feature>
<feature type="topological domain" description="Cytoplasmic" evidence="1">
    <location>
        <begin position="60"/>
        <end position="76"/>
    </location>
</feature>
<feature type="transmembrane region" description="Helical; Name=3" evidence="1">
    <location>
        <begin position="77"/>
        <end position="97"/>
    </location>
</feature>
<feature type="topological domain" description="Extracellular" evidence="1">
    <location>
        <begin position="98"/>
        <end position="104"/>
    </location>
</feature>
<feature type="transmembrane region" description="Helical; Name=4" evidence="1">
    <location>
        <begin position="105"/>
        <end position="125"/>
    </location>
</feature>
<feature type="topological domain" description="Cytoplasmic" evidence="1">
    <location>
        <begin position="126"/>
        <end position="139"/>
    </location>
</feature>
<feature type="transmembrane region" description="Helical; Name=5" evidence="1">
    <location>
        <begin position="140"/>
        <end position="160"/>
    </location>
</feature>
<feature type="topological domain" description="Extracellular" evidence="1">
    <location>
        <begin position="161"/>
        <end position="163"/>
    </location>
</feature>
<feature type="transmembrane region" description="Helical; Name=6" evidence="1">
    <location>
        <begin position="164"/>
        <end position="184"/>
    </location>
</feature>
<feature type="topological domain" description="Cytoplasmic" evidence="1">
    <location>
        <begin position="185"/>
        <end position="241"/>
    </location>
</feature>
<feature type="transmembrane region" description="Helical; Name=7" evidence="1">
    <location>
        <begin position="242"/>
        <end position="262"/>
    </location>
</feature>
<feature type="topological domain" description="Extracellular" evidence="1">
    <location>
        <begin position="263"/>
        <end position="280"/>
    </location>
</feature>
<feature type="transmembrane region" description="Helical; Name=8" evidence="1">
    <location>
        <begin position="281"/>
        <end position="301"/>
    </location>
</feature>
<feature type="topological domain" description="Cytoplasmic" evidence="1">
    <location>
        <begin position="302"/>
        <end position="308"/>
    </location>
</feature>
<feature type="transmembrane region" description="Helical; Name=9" evidence="1">
    <location>
        <begin position="309"/>
        <end position="329"/>
    </location>
</feature>
<feature type="topological domain" description="Extracellular" evidence="1">
    <location>
        <begin position="330"/>
        <end position="341"/>
    </location>
</feature>
<feature type="transmembrane region" description="Helical; Name=10" evidence="1">
    <location>
        <begin position="342"/>
        <end position="362"/>
    </location>
</feature>
<feature type="topological domain" description="Cytoplasmic" evidence="1">
    <location>
        <begin position="363"/>
        <end position="378"/>
    </location>
</feature>
<feature type="transmembrane region" description="Helical; Name=11" evidence="1">
    <location>
        <begin position="379"/>
        <end position="399"/>
    </location>
</feature>
<feature type="topological domain" description="Extracellular" evidence="1">
    <location>
        <begin position="400"/>
        <end position="402"/>
    </location>
</feature>
<feature type="transmembrane region" description="Helical; Name=12" evidence="1">
    <location>
        <begin position="403"/>
        <end position="423"/>
    </location>
</feature>
<feature type="topological domain" description="Cytoplasmic" evidence="1">
    <location>
        <begin position="424"/>
        <end position="461"/>
    </location>
</feature>
<feature type="sequence conflict" description="In Ref. 1; BAA21604." evidence="2" ref="1">
    <original>SA</original>
    <variation>RP</variation>
    <location>
        <begin position="400"/>
        <end position="401"/>
    </location>
</feature>
<protein>
    <recommendedName>
        <fullName>Probable metabolite transport protein CsbC</fullName>
    </recommendedName>
</protein>
<sequence length="461" mass="50140">MKKDTRKYMIYFFGALGGLLYGYDTGVISGALLFINNDIPLTTLTEGLVVSMLLLGAIFGSALSGTCSDRWGRRKVVFVLSIIFIIGALACAFSQTIGMLIASRVILGLAVGGSTALVPVYLSEMAPTKIRGTLGTMNNLMIVTGILLAYIVNYLFTPFEAWRWMVGLAAVPAVLLLIGIAFMPESPRWLVKRGSEEEARRIMNITHDPKDIEMELAEMKQGEAEKKETTLGVLKAKWIRPMLLIGVGLAIFQQAVGINTVIYYAPTIFTKAGLGTSASALGTMGIGILNVIMCITAMILIDRVGRKKLLIWGSVGITLSLAALSGVLLTLGLSASTAWMTVVFLGVYIVFYQATWGPVVWVLMPELFPSKARGAATGFTTLVLSAANLIVSLVFPLMLSAMGIAWVFMVFSVICLLSFFFAFYMVPETKGKSLEEIEASLKKRFKKKKSTQNQVLNERTL</sequence>
<keyword id="KW-1003">Cell membrane</keyword>
<keyword id="KW-0472">Membrane</keyword>
<keyword id="KW-1185">Reference proteome</keyword>
<keyword id="KW-0812">Transmembrane</keyword>
<keyword id="KW-1133">Transmembrane helix</keyword>
<keyword id="KW-0813">Transport</keyword>
<name>CSBC_BACSU</name>
<dbReference type="EMBL" id="AB005554">
    <property type="protein sequence ID" value="BAA21604.1"/>
    <property type="molecule type" value="Genomic_DNA"/>
</dbReference>
<dbReference type="EMBL" id="AL009126">
    <property type="protein sequence ID" value="CAB16017.1"/>
    <property type="molecule type" value="Genomic_DNA"/>
</dbReference>
<dbReference type="PIR" id="D70073">
    <property type="entry name" value="D70073"/>
</dbReference>
<dbReference type="RefSeq" id="NP_391860.1">
    <property type="nucleotide sequence ID" value="NC_000964.3"/>
</dbReference>
<dbReference type="RefSeq" id="WP_003244055.1">
    <property type="nucleotide sequence ID" value="NZ_OZ025638.1"/>
</dbReference>
<dbReference type="SMR" id="P46333"/>
<dbReference type="FunCoup" id="P46333">
    <property type="interactions" value="499"/>
</dbReference>
<dbReference type="IntAct" id="P46333">
    <property type="interactions" value="12"/>
</dbReference>
<dbReference type="STRING" id="224308.BSU39810"/>
<dbReference type="TCDB" id="2.A.1.1.106">
    <property type="family name" value="the major facilitator superfamily (mfs)"/>
</dbReference>
<dbReference type="PaxDb" id="224308-BSU39810"/>
<dbReference type="EnsemblBacteria" id="CAB16017">
    <property type="protein sequence ID" value="CAB16017"/>
    <property type="gene ID" value="BSU_39810"/>
</dbReference>
<dbReference type="GeneID" id="937639"/>
<dbReference type="KEGG" id="bsu:BSU39810"/>
<dbReference type="PATRIC" id="fig|224308.179.peg.4307"/>
<dbReference type="eggNOG" id="COG2814">
    <property type="taxonomic scope" value="Bacteria"/>
</dbReference>
<dbReference type="InParanoid" id="P46333"/>
<dbReference type="OrthoDB" id="9783823at2"/>
<dbReference type="PhylomeDB" id="P46333"/>
<dbReference type="BioCyc" id="BSUB:BSU39810-MONOMER"/>
<dbReference type="Proteomes" id="UP000001570">
    <property type="component" value="Chromosome"/>
</dbReference>
<dbReference type="GO" id="GO:0016020">
    <property type="term" value="C:membrane"/>
    <property type="evidence" value="ECO:0000318"/>
    <property type="project" value="GO_Central"/>
</dbReference>
<dbReference type="GO" id="GO:0005886">
    <property type="term" value="C:plasma membrane"/>
    <property type="evidence" value="ECO:0007669"/>
    <property type="project" value="UniProtKB-SubCell"/>
</dbReference>
<dbReference type="GO" id="GO:0055056">
    <property type="term" value="F:D-glucose transmembrane transporter activity"/>
    <property type="evidence" value="ECO:0000318"/>
    <property type="project" value="GO_Central"/>
</dbReference>
<dbReference type="GO" id="GO:1904659">
    <property type="term" value="P:D-glucose transmembrane transport"/>
    <property type="evidence" value="ECO:0000318"/>
    <property type="project" value="GO_Central"/>
</dbReference>
<dbReference type="CDD" id="cd17359">
    <property type="entry name" value="MFS_XylE_like"/>
    <property type="match status" value="1"/>
</dbReference>
<dbReference type="FunFam" id="1.20.1250.20:FF:000073">
    <property type="entry name" value="MFS myo-inositol transporter, putative"/>
    <property type="match status" value="1"/>
</dbReference>
<dbReference type="Gene3D" id="1.20.1250.20">
    <property type="entry name" value="MFS general substrate transporter like domains"/>
    <property type="match status" value="1"/>
</dbReference>
<dbReference type="InterPro" id="IPR020846">
    <property type="entry name" value="MFS_dom"/>
</dbReference>
<dbReference type="InterPro" id="IPR005828">
    <property type="entry name" value="MFS_sugar_transport-like"/>
</dbReference>
<dbReference type="InterPro" id="IPR036259">
    <property type="entry name" value="MFS_trans_sf"/>
</dbReference>
<dbReference type="InterPro" id="IPR050814">
    <property type="entry name" value="Myo-inositol_Transporter"/>
</dbReference>
<dbReference type="InterPro" id="IPR003663">
    <property type="entry name" value="Sugar/inositol_transpt"/>
</dbReference>
<dbReference type="InterPro" id="IPR005829">
    <property type="entry name" value="Sugar_transporter_CS"/>
</dbReference>
<dbReference type="InterPro" id="IPR047984">
    <property type="entry name" value="XylE-like"/>
</dbReference>
<dbReference type="NCBIfam" id="TIGR00879">
    <property type="entry name" value="SP"/>
    <property type="match status" value="1"/>
</dbReference>
<dbReference type="PANTHER" id="PTHR48020">
    <property type="entry name" value="PROTON MYO-INOSITOL COTRANSPORTER"/>
    <property type="match status" value="1"/>
</dbReference>
<dbReference type="PANTHER" id="PTHR48020:SF12">
    <property type="entry name" value="PROTON MYO-INOSITOL COTRANSPORTER"/>
    <property type="match status" value="1"/>
</dbReference>
<dbReference type="Pfam" id="PF00083">
    <property type="entry name" value="Sugar_tr"/>
    <property type="match status" value="1"/>
</dbReference>
<dbReference type="PRINTS" id="PR00171">
    <property type="entry name" value="SUGRTRNSPORT"/>
</dbReference>
<dbReference type="SUPFAM" id="SSF103473">
    <property type="entry name" value="MFS general substrate transporter"/>
    <property type="match status" value="1"/>
</dbReference>
<dbReference type="PROSITE" id="PS50850">
    <property type="entry name" value="MFS"/>
    <property type="match status" value="1"/>
</dbReference>
<dbReference type="PROSITE" id="PS00216">
    <property type="entry name" value="SUGAR_TRANSPORT_1"/>
    <property type="match status" value="2"/>
</dbReference>
<dbReference type="PROSITE" id="PS00217">
    <property type="entry name" value="SUGAR_TRANSPORT_2"/>
    <property type="match status" value="1"/>
</dbReference>